<sequence>MTDLSQVPSPYDESKFVTFDGSPFQLYQPYPPAGDQPEAIRQLVEGIGDGLSYQTLLGVTGSGKTYTMANVIAQAGRPAIVFAPNKTLAAQLYSEFREFFPRNAVEYFVSYYDYYQPEAYVPQRDLFIEKDSSVNEHIEQMRLSATKSLLERRDVVIVATVSAIYGIGNPTEYHQMILTLRTGDKISQRDVIARLIAMQYTRNETDFQRGTFRVRGDTVDIFPAEHAEMAVRLELFDDEVDSLQLFDPLTGRVRQKILRFTVYPSSHYVTPRETVLRAIGTIKAELRERLDFFYQENKLVEAQRLEQRTRFDLEMLQELGFCKGIENYSRHLSGAQPGEPPPTLVDYLPSDALMFLDESHVLIGQLNGMYNGDRARKETLSAYGFRLPSALDNRPLKFAEFEGKMRQVVFVSATPADYEKQRAGDEVVEQVVRPTGLVDPIIHVRPATTQVDDLLSEIHERVKAGERVLVTTLTKRMAEQLTEFLSENGVKVRYLHSDIDTVERVEIIRDLRLGTFDVLVGINLLREGLDIPEVSLVAILDADKEGFLRAERSLIQTIGRAARNVNGTAILYGDRITESMKKAIGETERRRAKQIAHNEAHGITPRGVVKRIKDIIDGVYNVDDARAELKAAQDAAKYEDMSEKQVGKEIKRLEKQMLDHAKNLEFEKAAAVRDQLAKLKSQVFGASGEDHIVPAA</sequence>
<protein>
    <recommendedName>
        <fullName evidence="1">UvrABC system protein B</fullName>
        <shortName evidence="1">Protein UvrB</shortName>
    </recommendedName>
    <alternativeName>
        <fullName evidence="1">Excinuclease ABC subunit B</fullName>
    </alternativeName>
</protein>
<accession>Q8Y0N2</accession>
<proteinExistence type="inferred from homology"/>
<reference key="1">
    <citation type="journal article" date="2002" name="Nature">
        <title>Genome sequence of the plant pathogen Ralstonia solanacearum.</title>
        <authorList>
            <person name="Salanoubat M."/>
            <person name="Genin S."/>
            <person name="Artiguenave F."/>
            <person name="Gouzy J."/>
            <person name="Mangenot S."/>
            <person name="Arlat M."/>
            <person name="Billault A."/>
            <person name="Brottier P."/>
            <person name="Camus J.-C."/>
            <person name="Cattolico L."/>
            <person name="Chandler M."/>
            <person name="Choisne N."/>
            <person name="Claudel-Renard C."/>
            <person name="Cunnac S."/>
            <person name="Demange N."/>
            <person name="Gaspin C."/>
            <person name="Lavie M."/>
            <person name="Moisan A."/>
            <person name="Robert C."/>
            <person name="Saurin W."/>
            <person name="Schiex T."/>
            <person name="Siguier P."/>
            <person name="Thebault P."/>
            <person name="Whalen M."/>
            <person name="Wincker P."/>
            <person name="Levy M."/>
            <person name="Weissenbach J."/>
            <person name="Boucher C.A."/>
        </authorList>
    </citation>
    <scope>NUCLEOTIDE SEQUENCE [LARGE SCALE GENOMIC DNA]</scope>
    <source>
        <strain>ATCC BAA-1114 / GMI1000</strain>
    </source>
</reference>
<evidence type="ECO:0000255" key="1">
    <source>
        <dbReference type="HAMAP-Rule" id="MF_00204"/>
    </source>
</evidence>
<name>UVRB_RALN1</name>
<comment type="function">
    <text evidence="1">The UvrABC repair system catalyzes the recognition and processing of DNA lesions. A damage recognition complex composed of 2 UvrA and 2 UvrB subunits scans DNA for abnormalities. Upon binding of the UvrA(2)B(2) complex to a putative damaged site, the DNA wraps around one UvrB monomer. DNA wrap is dependent on ATP binding by UvrB and probably causes local melting of the DNA helix, facilitating insertion of UvrB beta-hairpin between the DNA strands. Then UvrB probes one DNA strand for the presence of a lesion. If a lesion is found the UvrA subunits dissociate and the UvrB-DNA preincision complex is formed. This complex is subsequently bound by UvrC and the second UvrB is released. If no lesion is found, the DNA wraps around the other UvrB subunit that will check the other stand for damage.</text>
</comment>
<comment type="subunit">
    <text evidence="1">Forms a heterotetramer with UvrA during the search for lesions. Interacts with UvrC in an incision complex.</text>
</comment>
<comment type="subcellular location">
    <subcellularLocation>
        <location evidence="1">Cytoplasm</location>
    </subcellularLocation>
</comment>
<comment type="domain">
    <text evidence="1">The beta-hairpin motif is involved in DNA binding.</text>
</comment>
<comment type="similarity">
    <text evidence="1">Belongs to the UvrB family.</text>
</comment>
<feature type="chain" id="PRO_0000138419" description="UvrABC system protein B">
    <location>
        <begin position="1"/>
        <end position="696"/>
    </location>
</feature>
<feature type="domain" description="Helicase ATP-binding" evidence="1">
    <location>
        <begin position="45"/>
        <end position="434"/>
    </location>
</feature>
<feature type="domain" description="Helicase C-terminal" evidence="1">
    <location>
        <begin position="450"/>
        <end position="616"/>
    </location>
</feature>
<feature type="domain" description="UVR" evidence="1">
    <location>
        <begin position="647"/>
        <end position="682"/>
    </location>
</feature>
<feature type="short sequence motif" description="Beta-hairpin">
    <location>
        <begin position="111"/>
        <end position="134"/>
    </location>
</feature>
<feature type="binding site" evidence="1">
    <location>
        <begin position="58"/>
        <end position="65"/>
    </location>
    <ligand>
        <name>ATP</name>
        <dbReference type="ChEBI" id="CHEBI:30616"/>
    </ligand>
</feature>
<dbReference type="EMBL" id="AL646052">
    <property type="protein sequence ID" value="CAD14713.1"/>
    <property type="molecule type" value="Genomic_DNA"/>
</dbReference>
<dbReference type="RefSeq" id="WP_011000963.1">
    <property type="nucleotide sequence ID" value="NC_003295.1"/>
</dbReference>
<dbReference type="SMR" id="Q8Y0N2"/>
<dbReference type="STRING" id="267608.RSc1011"/>
<dbReference type="EnsemblBacteria" id="CAD14713">
    <property type="protein sequence ID" value="CAD14713"/>
    <property type="gene ID" value="RSc1011"/>
</dbReference>
<dbReference type="KEGG" id="rso:RSc1011"/>
<dbReference type="eggNOG" id="COG0556">
    <property type="taxonomic scope" value="Bacteria"/>
</dbReference>
<dbReference type="HOGENOM" id="CLU_009621_2_1_4"/>
<dbReference type="Proteomes" id="UP000001436">
    <property type="component" value="Chromosome"/>
</dbReference>
<dbReference type="GO" id="GO:0005737">
    <property type="term" value="C:cytoplasm"/>
    <property type="evidence" value="ECO:0007669"/>
    <property type="project" value="UniProtKB-SubCell"/>
</dbReference>
<dbReference type="GO" id="GO:0009380">
    <property type="term" value="C:excinuclease repair complex"/>
    <property type="evidence" value="ECO:0007669"/>
    <property type="project" value="InterPro"/>
</dbReference>
<dbReference type="GO" id="GO:0005524">
    <property type="term" value="F:ATP binding"/>
    <property type="evidence" value="ECO:0007669"/>
    <property type="project" value="UniProtKB-UniRule"/>
</dbReference>
<dbReference type="GO" id="GO:0016887">
    <property type="term" value="F:ATP hydrolysis activity"/>
    <property type="evidence" value="ECO:0007669"/>
    <property type="project" value="InterPro"/>
</dbReference>
<dbReference type="GO" id="GO:0003677">
    <property type="term" value="F:DNA binding"/>
    <property type="evidence" value="ECO:0007669"/>
    <property type="project" value="UniProtKB-UniRule"/>
</dbReference>
<dbReference type="GO" id="GO:0009381">
    <property type="term" value="F:excinuclease ABC activity"/>
    <property type="evidence" value="ECO:0007669"/>
    <property type="project" value="UniProtKB-UniRule"/>
</dbReference>
<dbReference type="GO" id="GO:0006289">
    <property type="term" value="P:nucleotide-excision repair"/>
    <property type="evidence" value="ECO:0007669"/>
    <property type="project" value="UniProtKB-UniRule"/>
</dbReference>
<dbReference type="GO" id="GO:0009432">
    <property type="term" value="P:SOS response"/>
    <property type="evidence" value="ECO:0007669"/>
    <property type="project" value="UniProtKB-UniRule"/>
</dbReference>
<dbReference type="CDD" id="cd17916">
    <property type="entry name" value="DEXHc_UvrB"/>
    <property type="match status" value="1"/>
</dbReference>
<dbReference type="CDD" id="cd18790">
    <property type="entry name" value="SF2_C_UvrB"/>
    <property type="match status" value="1"/>
</dbReference>
<dbReference type="Gene3D" id="6.10.140.240">
    <property type="match status" value="1"/>
</dbReference>
<dbReference type="Gene3D" id="3.40.50.300">
    <property type="entry name" value="P-loop containing nucleotide triphosphate hydrolases"/>
    <property type="match status" value="3"/>
</dbReference>
<dbReference type="Gene3D" id="4.10.860.10">
    <property type="entry name" value="UVR domain"/>
    <property type="match status" value="1"/>
</dbReference>
<dbReference type="HAMAP" id="MF_00204">
    <property type="entry name" value="UvrB"/>
    <property type="match status" value="1"/>
</dbReference>
<dbReference type="InterPro" id="IPR006935">
    <property type="entry name" value="Helicase/UvrB_N"/>
</dbReference>
<dbReference type="InterPro" id="IPR014001">
    <property type="entry name" value="Helicase_ATP-bd"/>
</dbReference>
<dbReference type="InterPro" id="IPR001650">
    <property type="entry name" value="Helicase_C-like"/>
</dbReference>
<dbReference type="InterPro" id="IPR027417">
    <property type="entry name" value="P-loop_NTPase"/>
</dbReference>
<dbReference type="InterPro" id="IPR001943">
    <property type="entry name" value="UVR_dom"/>
</dbReference>
<dbReference type="InterPro" id="IPR036876">
    <property type="entry name" value="UVR_dom_sf"/>
</dbReference>
<dbReference type="InterPro" id="IPR004807">
    <property type="entry name" value="UvrB"/>
</dbReference>
<dbReference type="InterPro" id="IPR041471">
    <property type="entry name" value="UvrB_inter"/>
</dbReference>
<dbReference type="InterPro" id="IPR024759">
    <property type="entry name" value="UvrB_YAD/RRR_dom"/>
</dbReference>
<dbReference type="NCBIfam" id="NF003673">
    <property type="entry name" value="PRK05298.1"/>
    <property type="match status" value="1"/>
</dbReference>
<dbReference type="NCBIfam" id="TIGR00631">
    <property type="entry name" value="uvrb"/>
    <property type="match status" value="1"/>
</dbReference>
<dbReference type="PANTHER" id="PTHR24029">
    <property type="entry name" value="UVRABC SYSTEM PROTEIN B"/>
    <property type="match status" value="1"/>
</dbReference>
<dbReference type="PANTHER" id="PTHR24029:SF0">
    <property type="entry name" value="UVRABC SYSTEM PROTEIN B"/>
    <property type="match status" value="1"/>
</dbReference>
<dbReference type="Pfam" id="PF00271">
    <property type="entry name" value="Helicase_C"/>
    <property type="match status" value="1"/>
</dbReference>
<dbReference type="Pfam" id="PF04851">
    <property type="entry name" value="ResIII"/>
    <property type="match status" value="1"/>
</dbReference>
<dbReference type="Pfam" id="PF02151">
    <property type="entry name" value="UVR"/>
    <property type="match status" value="1"/>
</dbReference>
<dbReference type="Pfam" id="PF12344">
    <property type="entry name" value="UvrB"/>
    <property type="match status" value="1"/>
</dbReference>
<dbReference type="Pfam" id="PF17757">
    <property type="entry name" value="UvrB_inter"/>
    <property type="match status" value="1"/>
</dbReference>
<dbReference type="SMART" id="SM00487">
    <property type="entry name" value="DEXDc"/>
    <property type="match status" value="1"/>
</dbReference>
<dbReference type="SMART" id="SM00490">
    <property type="entry name" value="HELICc"/>
    <property type="match status" value="1"/>
</dbReference>
<dbReference type="SUPFAM" id="SSF46600">
    <property type="entry name" value="C-terminal UvrC-binding domain of UvrB"/>
    <property type="match status" value="1"/>
</dbReference>
<dbReference type="SUPFAM" id="SSF52540">
    <property type="entry name" value="P-loop containing nucleoside triphosphate hydrolases"/>
    <property type="match status" value="2"/>
</dbReference>
<dbReference type="PROSITE" id="PS51192">
    <property type="entry name" value="HELICASE_ATP_BIND_1"/>
    <property type="match status" value="1"/>
</dbReference>
<dbReference type="PROSITE" id="PS51194">
    <property type="entry name" value="HELICASE_CTER"/>
    <property type="match status" value="1"/>
</dbReference>
<dbReference type="PROSITE" id="PS50151">
    <property type="entry name" value="UVR"/>
    <property type="match status" value="1"/>
</dbReference>
<organism>
    <name type="scientific">Ralstonia nicotianae (strain ATCC BAA-1114 / GMI1000)</name>
    <name type="common">Ralstonia solanacearum</name>
    <dbReference type="NCBI Taxonomy" id="267608"/>
    <lineage>
        <taxon>Bacteria</taxon>
        <taxon>Pseudomonadati</taxon>
        <taxon>Pseudomonadota</taxon>
        <taxon>Betaproteobacteria</taxon>
        <taxon>Burkholderiales</taxon>
        <taxon>Burkholderiaceae</taxon>
        <taxon>Ralstonia</taxon>
        <taxon>Ralstonia solanacearum species complex</taxon>
    </lineage>
</organism>
<keyword id="KW-0067">ATP-binding</keyword>
<keyword id="KW-0963">Cytoplasm</keyword>
<keyword id="KW-0227">DNA damage</keyword>
<keyword id="KW-0228">DNA excision</keyword>
<keyword id="KW-0234">DNA repair</keyword>
<keyword id="KW-0267">Excision nuclease</keyword>
<keyword id="KW-0547">Nucleotide-binding</keyword>
<keyword id="KW-1185">Reference proteome</keyword>
<keyword id="KW-0742">SOS response</keyword>
<gene>
    <name evidence="1" type="primary">uvrB</name>
    <name type="ordered locus">RSc1011</name>
    <name type="ORF">RS04277</name>
</gene>